<reference key="1">
    <citation type="journal article" date="2006" name="PLoS Genet.">
        <title>The complete genome sequence and comparative genome analysis of the high pathogenicity Yersinia enterocolitica strain 8081.</title>
        <authorList>
            <person name="Thomson N.R."/>
            <person name="Howard S."/>
            <person name="Wren B.W."/>
            <person name="Holden M.T.G."/>
            <person name="Crossman L."/>
            <person name="Challis G.L."/>
            <person name="Churcher C."/>
            <person name="Mungall K."/>
            <person name="Brooks K."/>
            <person name="Chillingworth T."/>
            <person name="Feltwell T."/>
            <person name="Abdellah Z."/>
            <person name="Hauser H."/>
            <person name="Jagels K."/>
            <person name="Maddison M."/>
            <person name="Moule S."/>
            <person name="Sanders M."/>
            <person name="Whitehead S."/>
            <person name="Quail M.A."/>
            <person name="Dougan G."/>
            <person name="Parkhill J."/>
            <person name="Prentice M.B."/>
        </authorList>
    </citation>
    <scope>NUCLEOTIDE SEQUENCE [LARGE SCALE GENOMIC DNA]</scope>
    <source>
        <strain>NCTC 13174 / 8081</strain>
    </source>
</reference>
<comment type="function">
    <text evidence="1">Involved in the degradation of chitin. ChbG is essential for growth on the acetylated chitooligosaccharides chitobiose and chitotriose but is dispensable for growth on cellobiose and chitosan dimer, the deacetylated form of chitobiose. Deacetylation of chitobiose-6-P and chitotriose-6-P is necessary for both the activation of the chb promoter by the regulatory protein ChbR and the hydrolysis of phosphorylated beta-glucosides by the phospho-beta-glucosidase ChbF. Catalyzes the removal of only one acetyl group from chitobiose-6-P to yield monoacetylchitobiose-6-P, the inducer of ChbR and the substrate of ChbF.</text>
</comment>
<comment type="catalytic activity">
    <reaction evidence="1">
        <text>N,N'-diacetylchitobiose + H2O = N-acetyl-beta-D-glucosaminyl-(1-&gt;4)-D-glucosamine + acetate</text>
        <dbReference type="Rhea" id="RHEA:27469"/>
        <dbReference type="ChEBI" id="CHEBI:15377"/>
        <dbReference type="ChEBI" id="CHEBI:28681"/>
        <dbReference type="ChEBI" id="CHEBI:30089"/>
        <dbReference type="ChEBI" id="CHEBI:59910"/>
        <dbReference type="EC" id="3.5.1.105"/>
    </reaction>
</comment>
<comment type="catalytic activity">
    <reaction evidence="1">
        <text>diacetylchitobiose-6'-phosphate + H2O = N'-monoacetylchitobiose-6'-phosphate + acetate</text>
        <dbReference type="Rhea" id="RHEA:35083"/>
        <dbReference type="ChEBI" id="CHEBI:15377"/>
        <dbReference type="ChEBI" id="CHEBI:30089"/>
        <dbReference type="ChEBI" id="CHEBI:64883"/>
        <dbReference type="ChEBI" id="CHEBI:71315"/>
    </reaction>
</comment>
<comment type="cofactor">
    <cofactor evidence="1">
        <name>Mg(2+)</name>
        <dbReference type="ChEBI" id="CHEBI:18420"/>
    </cofactor>
</comment>
<comment type="pathway">
    <text evidence="1">Glycan degradation; chitin degradation.</text>
</comment>
<comment type="subunit">
    <text evidence="1">Homodimer.</text>
</comment>
<comment type="subcellular location">
    <subcellularLocation>
        <location evidence="1">Cytoplasm</location>
    </subcellularLocation>
</comment>
<comment type="similarity">
    <text evidence="1">Belongs to the YdjC deacetylase family. ChbG subfamily.</text>
</comment>
<sequence length="253" mass="28383">MEKLLIVNADDFGLCKGQNYGIIEAFRHGIVSSTTAMMNCAEIYHAAELSKQNPALPVGMHFVLTYGRPLTAMQSLVDAKGELGKWLWARAEAGELNLDEIAQELTAQFNKFVAVFGRPPTHVDSHHHVHMLPQIYPLIESFAHEKSLPLRIDRHEAQQQGMVLNSPRSTEWFDAGFYGENLTEQSFLQLLAKADQNGINTIEVMCHPAFIDKILMTSGYCYPRLTELEILTSPALKQSIEQLGYRLGSYSDC</sequence>
<dbReference type="EC" id="3.5.1.105" evidence="1"/>
<dbReference type="EMBL" id="AM286415">
    <property type="protein sequence ID" value="CAL11070.1"/>
    <property type="molecule type" value="Genomic_DNA"/>
</dbReference>
<dbReference type="RefSeq" id="WP_011815723.1">
    <property type="nucleotide sequence ID" value="NC_008800.1"/>
</dbReference>
<dbReference type="RefSeq" id="YP_001005306.1">
    <property type="nucleotide sequence ID" value="NC_008800.1"/>
</dbReference>
<dbReference type="SMR" id="A1JKF8"/>
<dbReference type="KEGG" id="yen:YE0972"/>
<dbReference type="PATRIC" id="fig|393305.7.peg.1073"/>
<dbReference type="eggNOG" id="COG3394">
    <property type="taxonomic scope" value="Bacteria"/>
</dbReference>
<dbReference type="HOGENOM" id="CLU_064244_4_1_6"/>
<dbReference type="OrthoDB" id="9774177at2"/>
<dbReference type="UniPathway" id="UPA00349"/>
<dbReference type="Proteomes" id="UP000000642">
    <property type="component" value="Chromosome"/>
</dbReference>
<dbReference type="GO" id="GO:0005737">
    <property type="term" value="C:cytoplasm"/>
    <property type="evidence" value="ECO:0007669"/>
    <property type="project" value="UniProtKB-SubCell"/>
</dbReference>
<dbReference type="GO" id="GO:0036311">
    <property type="term" value="F:chitin disaccharide deacetylase activity"/>
    <property type="evidence" value="ECO:0007669"/>
    <property type="project" value="UniProtKB-UniRule"/>
</dbReference>
<dbReference type="GO" id="GO:0019213">
    <property type="term" value="F:deacetylase activity"/>
    <property type="evidence" value="ECO:0007669"/>
    <property type="project" value="TreeGrafter"/>
</dbReference>
<dbReference type="GO" id="GO:0046872">
    <property type="term" value="F:metal ion binding"/>
    <property type="evidence" value="ECO:0007669"/>
    <property type="project" value="UniProtKB-KW"/>
</dbReference>
<dbReference type="GO" id="GO:0006032">
    <property type="term" value="P:chitin catabolic process"/>
    <property type="evidence" value="ECO:0007669"/>
    <property type="project" value="UniProtKB-UniPathway"/>
</dbReference>
<dbReference type="GO" id="GO:0052777">
    <property type="term" value="P:diacetylchitobiose catabolic process"/>
    <property type="evidence" value="ECO:0007669"/>
    <property type="project" value="UniProtKB-UniRule"/>
</dbReference>
<dbReference type="GO" id="GO:0000272">
    <property type="term" value="P:polysaccharide catabolic process"/>
    <property type="evidence" value="ECO:0007669"/>
    <property type="project" value="UniProtKB-UniRule"/>
</dbReference>
<dbReference type="CDD" id="cd10803">
    <property type="entry name" value="YdjC_EF3048_like"/>
    <property type="match status" value="1"/>
</dbReference>
<dbReference type="Gene3D" id="3.20.20.370">
    <property type="entry name" value="Glycoside hydrolase/deacetylase"/>
    <property type="match status" value="1"/>
</dbReference>
<dbReference type="HAMAP" id="MF_01246">
    <property type="entry name" value="COD"/>
    <property type="match status" value="1"/>
</dbReference>
<dbReference type="InterPro" id="IPR022948">
    <property type="entry name" value="COD_ChbG_bac"/>
</dbReference>
<dbReference type="InterPro" id="IPR011330">
    <property type="entry name" value="Glyco_hydro/deAcase_b/a-brl"/>
</dbReference>
<dbReference type="InterPro" id="IPR006879">
    <property type="entry name" value="YdjC-like"/>
</dbReference>
<dbReference type="NCBIfam" id="NF002559">
    <property type="entry name" value="PRK02134.1"/>
    <property type="match status" value="1"/>
</dbReference>
<dbReference type="PANTHER" id="PTHR31609:SF1">
    <property type="entry name" value="CARBOHYDRATE DEACETYLASE"/>
    <property type="match status" value="1"/>
</dbReference>
<dbReference type="PANTHER" id="PTHR31609">
    <property type="entry name" value="YDJC DEACETYLASE FAMILY MEMBER"/>
    <property type="match status" value="1"/>
</dbReference>
<dbReference type="Pfam" id="PF04794">
    <property type="entry name" value="YdjC"/>
    <property type="match status" value="1"/>
</dbReference>
<dbReference type="SUPFAM" id="SSF88713">
    <property type="entry name" value="Glycoside hydrolase/deacetylase"/>
    <property type="match status" value="1"/>
</dbReference>
<accession>A1JKF8</accession>
<organism>
    <name type="scientific">Yersinia enterocolitica serotype O:8 / biotype 1B (strain NCTC 13174 / 8081)</name>
    <dbReference type="NCBI Taxonomy" id="393305"/>
    <lineage>
        <taxon>Bacteria</taxon>
        <taxon>Pseudomonadati</taxon>
        <taxon>Pseudomonadota</taxon>
        <taxon>Gammaproteobacteria</taxon>
        <taxon>Enterobacterales</taxon>
        <taxon>Yersiniaceae</taxon>
        <taxon>Yersinia</taxon>
    </lineage>
</organism>
<keyword id="KW-0119">Carbohydrate metabolism</keyword>
<keyword id="KW-0146">Chitin degradation</keyword>
<keyword id="KW-0963">Cytoplasm</keyword>
<keyword id="KW-0378">Hydrolase</keyword>
<keyword id="KW-0460">Magnesium</keyword>
<keyword id="KW-0479">Metal-binding</keyword>
<keyword id="KW-0624">Polysaccharide degradation</keyword>
<proteinExistence type="inferred from homology"/>
<gene>
    <name evidence="1" type="primary">chbG</name>
    <name type="ordered locus">YE0972</name>
</gene>
<protein>
    <recommendedName>
        <fullName evidence="1">Chitooligosaccharide deacetylase</fullName>
        <shortName evidence="1">COD</shortName>
        <ecNumber evidence="1">3.5.1.105</ecNumber>
    </recommendedName>
    <alternativeName>
        <fullName evidence="1">Chitin disaccharide deacetylase</fullName>
    </alternativeName>
    <alternativeName>
        <fullName evidence="1">Chitobiose deacetylase</fullName>
    </alternativeName>
    <alternativeName>
        <fullName evidence="1">Chitobiose-6P deacetylase</fullName>
    </alternativeName>
    <alternativeName>
        <fullName evidence="1">Chitotriose deacetylase</fullName>
    </alternativeName>
    <alternativeName>
        <fullName evidence="1">Chitotriose-6P deacetylase</fullName>
    </alternativeName>
</protein>
<name>CHBG_YERE8</name>
<feature type="chain" id="PRO_1000067091" description="Chitooligosaccharide deacetylase">
    <location>
        <begin position="1"/>
        <end position="253"/>
    </location>
</feature>
<feature type="binding site" evidence="1">
    <location>
        <position position="61"/>
    </location>
    <ligand>
        <name>Mg(2+)</name>
        <dbReference type="ChEBI" id="CHEBI:18420"/>
    </ligand>
</feature>
<feature type="binding site" evidence="1">
    <location>
        <position position="126"/>
    </location>
    <ligand>
        <name>Mg(2+)</name>
        <dbReference type="ChEBI" id="CHEBI:18420"/>
    </ligand>
</feature>
<evidence type="ECO:0000255" key="1">
    <source>
        <dbReference type="HAMAP-Rule" id="MF_01246"/>
    </source>
</evidence>